<protein>
    <recommendedName>
        <fullName evidence="1">Alanine racemase</fullName>
        <ecNumber evidence="1">5.1.1.1</ecNumber>
    </recommendedName>
</protein>
<sequence length="389" mass="43278">MQDINSGSSSMKDTYSSWIEISKRSLSNNLDNFRSILRPNSTLTAILKSNAYGHGIEPMTRLCIEAGISRIGVNSIEEALLIRNIDSKIPILIMGEIQNPEKRKDVLSDPNFWIVFSRPETARILSSFLPAPKLHLKIDTGMGRLGSHGETLKQTLSELKNVGITLGGICTHFASTEDVLEHKYSLMQTQKFEEAIFLAKSFGYNHLIRHACASASTMLFPNAHFDMVRIGISLYGLWPSIQTRLSLNLTGNKNFQLNPILSWKSRIVHIQYHPADSYIGYGSTFQTSYPTKVAIVPVGYYEGLDRKLSSNGDMLVLGKKARIIGRICMNMTMLDVTHIPGAEVGSIVTIIGQDGEESITADDLADRTHTINYEVMTRISESIPRIVVD</sequence>
<organism>
    <name type="scientific">Leptospira interrogans serogroup Icterohaemorrhagiae serovar Lai (strain 56601)</name>
    <dbReference type="NCBI Taxonomy" id="189518"/>
    <lineage>
        <taxon>Bacteria</taxon>
        <taxon>Pseudomonadati</taxon>
        <taxon>Spirochaetota</taxon>
        <taxon>Spirochaetia</taxon>
        <taxon>Leptospirales</taxon>
        <taxon>Leptospiraceae</taxon>
        <taxon>Leptospira</taxon>
    </lineage>
</organism>
<gene>
    <name type="primary">alr</name>
    <name type="ordered locus">LB_317</name>
</gene>
<dbReference type="EC" id="5.1.1.1" evidence="1"/>
<dbReference type="EMBL" id="AE010301">
    <property type="protein sequence ID" value="AAN51876.1"/>
    <property type="molecule type" value="Genomic_DNA"/>
</dbReference>
<dbReference type="RefSeq" id="NP_714861.1">
    <property type="nucleotide sequence ID" value="NC_004343.2"/>
</dbReference>
<dbReference type="SMR" id="Q8EX97"/>
<dbReference type="FunCoup" id="Q8EX97">
    <property type="interactions" value="334"/>
</dbReference>
<dbReference type="STRING" id="189518.LB_317"/>
<dbReference type="PaxDb" id="189518-LB_317"/>
<dbReference type="EnsemblBacteria" id="AAN51876">
    <property type="protein sequence ID" value="AAN51876"/>
    <property type="gene ID" value="LB_317"/>
</dbReference>
<dbReference type="KEGG" id="lil:LB_317"/>
<dbReference type="PATRIC" id="fig|189518.3.peg.4636"/>
<dbReference type="HOGENOM" id="CLU_028393_2_2_12"/>
<dbReference type="InParanoid" id="Q8EX97"/>
<dbReference type="OrthoDB" id="9813814at2"/>
<dbReference type="UniPathway" id="UPA00042">
    <property type="reaction ID" value="UER00497"/>
</dbReference>
<dbReference type="Proteomes" id="UP000001408">
    <property type="component" value="Chromosome II"/>
</dbReference>
<dbReference type="GO" id="GO:0005829">
    <property type="term" value="C:cytosol"/>
    <property type="evidence" value="ECO:0000318"/>
    <property type="project" value="GO_Central"/>
</dbReference>
<dbReference type="GO" id="GO:0008784">
    <property type="term" value="F:alanine racemase activity"/>
    <property type="evidence" value="ECO:0000318"/>
    <property type="project" value="GO_Central"/>
</dbReference>
<dbReference type="GO" id="GO:0030170">
    <property type="term" value="F:pyridoxal phosphate binding"/>
    <property type="evidence" value="ECO:0000318"/>
    <property type="project" value="GO_Central"/>
</dbReference>
<dbReference type="GO" id="GO:0030632">
    <property type="term" value="P:D-alanine biosynthetic process"/>
    <property type="evidence" value="ECO:0000318"/>
    <property type="project" value="GO_Central"/>
</dbReference>
<dbReference type="CDD" id="cd00430">
    <property type="entry name" value="PLPDE_III_AR"/>
    <property type="match status" value="1"/>
</dbReference>
<dbReference type="FunFam" id="3.20.20.10:FF:000002">
    <property type="entry name" value="Alanine racemase"/>
    <property type="match status" value="1"/>
</dbReference>
<dbReference type="Gene3D" id="3.20.20.10">
    <property type="entry name" value="Alanine racemase"/>
    <property type="match status" value="1"/>
</dbReference>
<dbReference type="Gene3D" id="2.40.37.10">
    <property type="entry name" value="Lyase, Ornithine Decarboxylase, Chain A, domain 1"/>
    <property type="match status" value="1"/>
</dbReference>
<dbReference type="HAMAP" id="MF_01201">
    <property type="entry name" value="Ala_racemase"/>
    <property type="match status" value="1"/>
</dbReference>
<dbReference type="InterPro" id="IPR000821">
    <property type="entry name" value="Ala_racemase"/>
</dbReference>
<dbReference type="InterPro" id="IPR009006">
    <property type="entry name" value="Ala_racemase/Decarboxylase_C"/>
</dbReference>
<dbReference type="InterPro" id="IPR011079">
    <property type="entry name" value="Ala_racemase_C"/>
</dbReference>
<dbReference type="InterPro" id="IPR001608">
    <property type="entry name" value="Ala_racemase_N"/>
</dbReference>
<dbReference type="InterPro" id="IPR020622">
    <property type="entry name" value="Ala_racemase_pyridoxalP-BS"/>
</dbReference>
<dbReference type="InterPro" id="IPR029066">
    <property type="entry name" value="PLP-binding_barrel"/>
</dbReference>
<dbReference type="NCBIfam" id="TIGR00492">
    <property type="entry name" value="alr"/>
    <property type="match status" value="1"/>
</dbReference>
<dbReference type="PANTHER" id="PTHR30511">
    <property type="entry name" value="ALANINE RACEMASE"/>
    <property type="match status" value="1"/>
</dbReference>
<dbReference type="PANTHER" id="PTHR30511:SF0">
    <property type="entry name" value="ALANINE RACEMASE, CATABOLIC-RELATED"/>
    <property type="match status" value="1"/>
</dbReference>
<dbReference type="Pfam" id="PF00842">
    <property type="entry name" value="Ala_racemase_C"/>
    <property type="match status" value="1"/>
</dbReference>
<dbReference type="Pfam" id="PF01168">
    <property type="entry name" value="Ala_racemase_N"/>
    <property type="match status" value="1"/>
</dbReference>
<dbReference type="PRINTS" id="PR00992">
    <property type="entry name" value="ALARACEMASE"/>
</dbReference>
<dbReference type="SMART" id="SM01005">
    <property type="entry name" value="Ala_racemase_C"/>
    <property type="match status" value="1"/>
</dbReference>
<dbReference type="SUPFAM" id="SSF50621">
    <property type="entry name" value="Alanine racemase C-terminal domain-like"/>
    <property type="match status" value="1"/>
</dbReference>
<dbReference type="SUPFAM" id="SSF51419">
    <property type="entry name" value="PLP-binding barrel"/>
    <property type="match status" value="1"/>
</dbReference>
<dbReference type="PROSITE" id="PS00395">
    <property type="entry name" value="ALANINE_RACEMASE"/>
    <property type="match status" value="1"/>
</dbReference>
<evidence type="ECO:0000255" key="1">
    <source>
        <dbReference type="HAMAP-Rule" id="MF_01201"/>
    </source>
</evidence>
<name>ALR_LEPIN</name>
<feature type="chain" id="PRO_0000114531" description="Alanine racemase">
    <location>
        <begin position="1"/>
        <end position="389"/>
    </location>
</feature>
<feature type="active site" description="Proton acceptor; specific for D-alanine" evidence="1">
    <location>
        <position position="48"/>
    </location>
</feature>
<feature type="active site" description="Proton acceptor; specific for L-alanine" evidence="1">
    <location>
        <position position="281"/>
    </location>
</feature>
<feature type="binding site" evidence="1">
    <location>
        <position position="144"/>
    </location>
    <ligand>
        <name>substrate</name>
    </ligand>
</feature>
<feature type="binding site" evidence="1">
    <location>
        <position position="329"/>
    </location>
    <ligand>
        <name>substrate</name>
    </ligand>
</feature>
<feature type="modified residue" description="N6-(pyridoxal phosphate)lysine" evidence="1">
    <location>
        <position position="48"/>
    </location>
</feature>
<proteinExistence type="inferred from homology"/>
<reference key="1">
    <citation type="journal article" date="2003" name="Nature">
        <title>Unique physiological and pathogenic features of Leptospira interrogans revealed by whole-genome sequencing.</title>
        <authorList>
            <person name="Ren S.-X."/>
            <person name="Fu G."/>
            <person name="Jiang X.-G."/>
            <person name="Zeng R."/>
            <person name="Miao Y.-G."/>
            <person name="Xu H."/>
            <person name="Zhang Y.-X."/>
            <person name="Xiong H."/>
            <person name="Lu G."/>
            <person name="Lu L.-F."/>
            <person name="Jiang H.-Q."/>
            <person name="Jia J."/>
            <person name="Tu Y.-F."/>
            <person name="Jiang J.-X."/>
            <person name="Gu W.-Y."/>
            <person name="Zhang Y.-Q."/>
            <person name="Cai Z."/>
            <person name="Sheng H.-H."/>
            <person name="Yin H.-F."/>
            <person name="Zhang Y."/>
            <person name="Zhu G.-F."/>
            <person name="Wan M."/>
            <person name="Huang H.-L."/>
            <person name="Qian Z."/>
            <person name="Wang S.-Y."/>
            <person name="Ma W."/>
            <person name="Yao Z.-J."/>
            <person name="Shen Y."/>
            <person name="Qiang B.-Q."/>
            <person name="Xia Q.-C."/>
            <person name="Guo X.-K."/>
            <person name="Danchin A."/>
            <person name="Saint Girons I."/>
            <person name="Somerville R.L."/>
            <person name="Wen Y.-M."/>
            <person name="Shi M.-H."/>
            <person name="Chen Z."/>
            <person name="Xu J.-G."/>
            <person name="Zhao G.-P."/>
        </authorList>
    </citation>
    <scope>NUCLEOTIDE SEQUENCE [LARGE SCALE GENOMIC DNA]</scope>
    <source>
        <strain>56601</strain>
    </source>
</reference>
<accession>Q8EX97</accession>
<comment type="function">
    <text evidence="1">Catalyzes the interconversion of L-alanine and D-alanine. May also act on other amino acids.</text>
</comment>
<comment type="catalytic activity">
    <reaction evidence="1">
        <text>L-alanine = D-alanine</text>
        <dbReference type="Rhea" id="RHEA:20249"/>
        <dbReference type="ChEBI" id="CHEBI:57416"/>
        <dbReference type="ChEBI" id="CHEBI:57972"/>
        <dbReference type="EC" id="5.1.1.1"/>
    </reaction>
</comment>
<comment type="cofactor">
    <cofactor evidence="1">
        <name>pyridoxal 5'-phosphate</name>
        <dbReference type="ChEBI" id="CHEBI:597326"/>
    </cofactor>
</comment>
<comment type="pathway">
    <text evidence="1">Amino-acid biosynthesis; D-alanine biosynthesis; D-alanine from L-alanine: step 1/1.</text>
</comment>
<comment type="similarity">
    <text evidence="1">Belongs to the alanine racemase family.</text>
</comment>
<keyword id="KW-0413">Isomerase</keyword>
<keyword id="KW-0663">Pyridoxal phosphate</keyword>
<keyword id="KW-1185">Reference proteome</keyword>